<gene>
    <name type="primary">HBX4</name>
</gene>
<name>HBX4_ECHGR</name>
<evidence type="ECO:0000255" key="1">
    <source>
        <dbReference type="PROSITE-ProRule" id="PRU00108"/>
    </source>
</evidence>
<evidence type="ECO:0000305" key="2"/>
<sequence length="60" mass="7241">SRRERTIYTPEQLEAMEEVFGVNRYPDVSMREELASRLGINESKIQVWFKNRRAKLRNLE</sequence>
<dbReference type="EMBL" id="X66820">
    <property type="status" value="NOT_ANNOTATED_CDS"/>
    <property type="molecule type" value="Genomic_DNA"/>
</dbReference>
<dbReference type="PIR" id="JC1389">
    <property type="entry name" value="JC1389"/>
</dbReference>
<dbReference type="SMR" id="P55813"/>
<dbReference type="EnsemblMetazoa" id="XM_024496477.1">
    <property type="protein sequence ID" value="XP_024349062.1"/>
    <property type="gene ID" value="GeneID_36342943"/>
</dbReference>
<dbReference type="OrthoDB" id="6159439at2759"/>
<dbReference type="Proteomes" id="UP000492820">
    <property type="component" value="Unplaced"/>
</dbReference>
<dbReference type="GO" id="GO:0005634">
    <property type="term" value="C:nucleus"/>
    <property type="evidence" value="ECO:0007669"/>
    <property type="project" value="UniProtKB-SubCell"/>
</dbReference>
<dbReference type="GO" id="GO:0000981">
    <property type="term" value="F:DNA-binding transcription factor activity, RNA polymerase II-specific"/>
    <property type="evidence" value="ECO:0007669"/>
    <property type="project" value="InterPro"/>
</dbReference>
<dbReference type="GO" id="GO:0000978">
    <property type="term" value="F:RNA polymerase II cis-regulatory region sequence-specific DNA binding"/>
    <property type="evidence" value="ECO:0007669"/>
    <property type="project" value="TreeGrafter"/>
</dbReference>
<dbReference type="CDD" id="cd00086">
    <property type="entry name" value="homeodomain"/>
    <property type="match status" value="1"/>
</dbReference>
<dbReference type="Gene3D" id="1.10.10.60">
    <property type="entry name" value="Homeodomain-like"/>
    <property type="match status" value="1"/>
</dbReference>
<dbReference type="InterPro" id="IPR001356">
    <property type="entry name" value="HD"/>
</dbReference>
<dbReference type="InterPro" id="IPR020479">
    <property type="entry name" value="HD_metazoa"/>
</dbReference>
<dbReference type="InterPro" id="IPR017970">
    <property type="entry name" value="Homeobox_CS"/>
</dbReference>
<dbReference type="InterPro" id="IPR009057">
    <property type="entry name" value="Homeodomain-like_sf"/>
</dbReference>
<dbReference type="InterPro" id="IPR000047">
    <property type="entry name" value="HTH_motif"/>
</dbReference>
<dbReference type="PANTHER" id="PTHR45793">
    <property type="entry name" value="HOMEOBOX PROTEIN"/>
    <property type="match status" value="1"/>
</dbReference>
<dbReference type="PANTHER" id="PTHR45793:SF5">
    <property type="entry name" value="HOMEOTIC PROTEIN OCELLILESS"/>
    <property type="match status" value="1"/>
</dbReference>
<dbReference type="Pfam" id="PF00046">
    <property type="entry name" value="Homeodomain"/>
    <property type="match status" value="1"/>
</dbReference>
<dbReference type="PRINTS" id="PR00024">
    <property type="entry name" value="HOMEOBOX"/>
</dbReference>
<dbReference type="PRINTS" id="PR00031">
    <property type="entry name" value="HTHREPRESSR"/>
</dbReference>
<dbReference type="SMART" id="SM00389">
    <property type="entry name" value="HOX"/>
    <property type="match status" value="1"/>
</dbReference>
<dbReference type="SUPFAM" id="SSF46689">
    <property type="entry name" value="Homeodomain-like"/>
    <property type="match status" value="1"/>
</dbReference>
<dbReference type="PROSITE" id="PS00027">
    <property type="entry name" value="HOMEOBOX_1"/>
    <property type="match status" value="1"/>
</dbReference>
<dbReference type="PROSITE" id="PS50071">
    <property type="entry name" value="HOMEOBOX_2"/>
    <property type="match status" value="1"/>
</dbReference>
<reference key="1">
    <citation type="journal article" date="1992" name="Gene">
        <title>Homeoboxes in flatworms.</title>
        <authorList>
            <person name="Oliver G."/>
            <person name="Vispo M."/>
            <person name="Maihlos A."/>
            <person name="Martinez C."/>
            <person name="Sosa-Pineda B."/>
            <person name="Fielitz W."/>
            <person name="Ehrlich R."/>
        </authorList>
    </citation>
    <scope>NUCLEOTIDE SEQUENCE [GENOMIC DNA]</scope>
</reference>
<accession>P55813</accession>
<feature type="chain" id="PRO_0000048908" description="Homeobox protein EgHBX4">
    <location>
        <begin position="1" status="less than"/>
        <end position="60" status="greater than"/>
    </location>
</feature>
<feature type="DNA-binding region" description="Homeobox" evidence="1">
    <location>
        <begin position="1"/>
        <end position="60"/>
    </location>
</feature>
<feature type="non-terminal residue">
    <location>
        <position position="1"/>
    </location>
</feature>
<feature type="non-terminal residue">
    <location>
        <position position="60"/>
    </location>
</feature>
<organism>
    <name type="scientific">Echinococcus granulosus</name>
    <name type="common">Hydatid tapeworm</name>
    <dbReference type="NCBI Taxonomy" id="6210"/>
    <lineage>
        <taxon>Eukaryota</taxon>
        <taxon>Metazoa</taxon>
        <taxon>Spiralia</taxon>
        <taxon>Lophotrochozoa</taxon>
        <taxon>Platyhelminthes</taxon>
        <taxon>Cestoda</taxon>
        <taxon>Eucestoda</taxon>
        <taxon>Cyclophyllidea</taxon>
        <taxon>Taeniidae</taxon>
        <taxon>Echinococcus</taxon>
        <taxon>Echinococcus granulosus group</taxon>
    </lineage>
</organism>
<protein>
    <recommendedName>
        <fullName>Homeobox protein EgHBX4</fullName>
    </recommendedName>
</protein>
<proteinExistence type="inferred from homology"/>
<keyword id="KW-0217">Developmental protein</keyword>
<keyword id="KW-0238">DNA-binding</keyword>
<keyword id="KW-0371">Homeobox</keyword>
<keyword id="KW-0539">Nucleus</keyword>
<comment type="subcellular location">
    <subcellularLocation>
        <location evidence="2">Nucleus</location>
    </subcellularLocation>
</comment>
<comment type="similarity">
    <text evidence="2">Belongs to the paired homeobox family. Bicoid subfamily.</text>
</comment>